<reference key="1">
    <citation type="journal article" date="2001" name="Science">
        <title>Mechanisms of evolution in Rickettsia conorii and R. prowazekii.</title>
        <authorList>
            <person name="Ogata H."/>
            <person name="Audic S."/>
            <person name="Renesto-Audiffren P."/>
            <person name="Fournier P.-E."/>
            <person name="Barbe V."/>
            <person name="Samson D."/>
            <person name="Roux V."/>
            <person name="Cossart P."/>
            <person name="Weissenbach J."/>
            <person name="Claverie J.-M."/>
            <person name="Raoult D."/>
        </authorList>
    </citation>
    <scope>NUCLEOTIDE SEQUENCE [LARGE SCALE GENOMIC DNA]</scope>
    <source>
        <strain>ATCC VR-613 / Malish 7</strain>
    </source>
</reference>
<feature type="chain" id="PRO_0000143876" description="Uridylate kinase">
    <location>
        <begin position="1"/>
        <end position="242"/>
    </location>
</feature>
<feature type="binding site" evidence="1">
    <location>
        <begin position="16"/>
        <end position="19"/>
    </location>
    <ligand>
        <name>ATP</name>
        <dbReference type="ChEBI" id="CHEBI:30616"/>
    </ligand>
</feature>
<feature type="binding site" evidence="1">
    <location>
        <position position="58"/>
    </location>
    <ligand>
        <name>UMP</name>
        <dbReference type="ChEBI" id="CHEBI:57865"/>
    </ligand>
</feature>
<feature type="binding site" evidence="1">
    <location>
        <position position="59"/>
    </location>
    <ligand>
        <name>ATP</name>
        <dbReference type="ChEBI" id="CHEBI:30616"/>
    </ligand>
</feature>
<feature type="binding site" evidence="1">
    <location>
        <position position="63"/>
    </location>
    <ligand>
        <name>ATP</name>
        <dbReference type="ChEBI" id="CHEBI:30616"/>
    </ligand>
</feature>
<feature type="binding site" evidence="1">
    <location>
        <position position="78"/>
    </location>
    <ligand>
        <name>UMP</name>
        <dbReference type="ChEBI" id="CHEBI:57865"/>
    </ligand>
</feature>
<feature type="binding site" evidence="1">
    <location>
        <begin position="139"/>
        <end position="146"/>
    </location>
    <ligand>
        <name>UMP</name>
        <dbReference type="ChEBI" id="CHEBI:57865"/>
    </ligand>
</feature>
<feature type="binding site" evidence="1">
    <location>
        <position position="166"/>
    </location>
    <ligand>
        <name>ATP</name>
        <dbReference type="ChEBI" id="CHEBI:30616"/>
    </ligand>
</feature>
<feature type="binding site" evidence="1">
    <location>
        <position position="167"/>
    </location>
    <ligand>
        <name>ATP</name>
        <dbReference type="ChEBI" id="CHEBI:30616"/>
    </ligand>
</feature>
<feature type="binding site" evidence="1">
    <location>
        <position position="172"/>
    </location>
    <ligand>
        <name>ATP</name>
        <dbReference type="ChEBI" id="CHEBI:30616"/>
    </ligand>
</feature>
<feature type="binding site" evidence="1">
    <location>
        <position position="175"/>
    </location>
    <ligand>
        <name>ATP</name>
        <dbReference type="ChEBI" id="CHEBI:30616"/>
    </ligand>
</feature>
<keyword id="KW-0067">ATP-binding</keyword>
<keyword id="KW-0963">Cytoplasm</keyword>
<keyword id="KW-0418">Kinase</keyword>
<keyword id="KW-0547">Nucleotide-binding</keyword>
<keyword id="KW-0665">Pyrimidine biosynthesis</keyword>
<keyword id="KW-0808">Transferase</keyword>
<evidence type="ECO:0000255" key="1">
    <source>
        <dbReference type="HAMAP-Rule" id="MF_01220"/>
    </source>
</evidence>
<evidence type="ECO:0000305" key="2"/>
<name>PYRH_RICCN</name>
<comment type="function">
    <text evidence="1">Catalyzes the reversible phosphorylation of UMP to UDP.</text>
</comment>
<comment type="catalytic activity">
    <reaction evidence="1">
        <text>UMP + ATP = UDP + ADP</text>
        <dbReference type="Rhea" id="RHEA:24400"/>
        <dbReference type="ChEBI" id="CHEBI:30616"/>
        <dbReference type="ChEBI" id="CHEBI:57865"/>
        <dbReference type="ChEBI" id="CHEBI:58223"/>
        <dbReference type="ChEBI" id="CHEBI:456216"/>
        <dbReference type="EC" id="2.7.4.22"/>
    </reaction>
</comment>
<comment type="activity regulation">
    <text evidence="1">Inhibited by UTP.</text>
</comment>
<comment type="pathway">
    <text evidence="1">Pyrimidine metabolism; CTP biosynthesis via de novo pathway; UDP from UMP (UMPK route): step 1/1.</text>
</comment>
<comment type="subunit">
    <text evidence="1">Homohexamer.</text>
</comment>
<comment type="subcellular location">
    <subcellularLocation>
        <location evidence="1">Cytoplasm</location>
    </subcellularLocation>
</comment>
<comment type="similarity">
    <text evidence="1">Belongs to the UMP kinase family.</text>
</comment>
<comment type="sequence caution" evidence="2">
    <conflict type="erroneous initiation">
        <sequence resource="EMBL-CDS" id="AAL02736"/>
    </conflict>
</comment>
<proteinExistence type="inferred from homology"/>
<dbReference type="EC" id="2.7.4.22" evidence="1"/>
<dbReference type="EMBL" id="AE006914">
    <property type="protein sequence ID" value="AAL02736.1"/>
    <property type="status" value="ALT_INIT"/>
    <property type="molecule type" value="Genomic_DNA"/>
</dbReference>
<dbReference type="PIR" id="F97724">
    <property type="entry name" value="F97724"/>
</dbReference>
<dbReference type="RefSeq" id="WP_041471756.1">
    <property type="nucleotide sequence ID" value="NC_003103.1"/>
</dbReference>
<dbReference type="SMR" id="Q92J71"/>
<dbReference type="GeneID" id="927992"/>
<dbReference type="KEGG" id="rco:RC0198"/>
<dbReference type="PATRIC" id="fig|272944.4.peg.228"/>
<dbReference type="HOGENOM" id="CLU_033861_0_0_5"/>
<dbReference type="UniPathway" id="UPA00159">
    <property type="reaction ID" value="UER00275"/>
</dbReference>
<dbReference type="Proteomes" id="UP000000816">
    <property type="component" value="Chromosome"/>
</dbReference>
<dbReference type="GO" id="GO:0005737">
    <property type="term" value="C:cytoplasm"/>
    <property type="evidence" value="ECO:0007669"/>
    <property type="project" value="UniProtKB-SubCell"/>
</dbReference>
<dbReference type="GO" id="GO:0005524">
    <property type="term" value="F:ATP binding"/>
    <property type="evidence" value="ECO:0007669"/>
    <property type="project" value="UniProtKB-KW"/>
</dbReference>
<dbReference type="GO" id="GO:0033862">
    <property type="term" value="F:UMP kinase activity"/>
    <property type="evidence" value="ECO:0007669"/>
    <property type="project" value="UniProtKB-EC"/>
</dbReference>
<dbReference type="GO" id="GO:0044210">
    <property type="term" value="P:'de novo' CTP biosynthetic process"/>
    <property type="evidence" value="ECO:0007669"/>
    <property type="project" value="UniProtKB-UniRule"/>
</dbReference>
<dbReference type="GO" id="GO:0006225">
    <property type="term" value="P:UDP biosynthetic process"/>
    <property type="evidence" value="ECO:0007669"/>
    <property type="project" value="TreeGrafter"/>
</dbReference>
<dbReference type="CDD" id="cd04254">
    <property type="entry name" value="AAK_UMPK-PyrH-Ec"/>
    <property type="match status" value="1"/>
</dbReference>
<dbReference type="FunFam" id="3.40.1160.10:FF:000001">
    <property type="entry name" value="Uridylate kinase"/>
    <property type="match status" value="1"/>
</dbReference>
<dbReference type="Gene3D" id="3.40.1160.10">
    <property type="entry name" value="Acetylglutamate kinase-like"/>
    <property type="match status" value="1"/>
</dbReference>
<dbReference type="HAMAP" id="MF_01220_B">
    <property type="entry name" value="PyrH_B"/>
    <property type="match status" value="1"/>
</dbReference>
<dbReference type="InterPro" id="IPR036393">
    <property type="entry name" value="AceGlu_kinase-like_sf"/>
</dbReference>
<dbReference type="InterPro" id="IPR001048">
    <property type="entry name" value="Asp/Glu/Uridylate_kinase"/>
</dbReference>
<dbReference type="InterPro" id="IPR011817">
    <property type="entry name" value="Uridylate_kinase"/>
</dbReference>
<dbReference type="InterPro" id="IPR015963">
    <property type="entry name" value="Uridylate_kinase_bac"/>
</dbReference>
<dbReference type="NCBIfam" id="TIGR02075">
    <property type="entry name" value="pyrH_bact"/>
    <property type="match status" value="1"/>
</dbReference>
<dbReference type="PANTHER" id="PTHR42833">
    <property type="entry name" value="URIDYLATE KINASE"/>
    <property type="match status" value="1"/>
</dbReference>
<dbReference type="PANTHER" id="PTHR42833:SF4">
    <property type="entry name" value="URIDYLATE KINASE PUMPKIN, CHLOROPLASTIC"/>
    <property type="match status" value="1"/>
</dbReference>
<dbReference type="Pfam" id="PF00696">
    <property type="entry name" value="AA_kinase"/>
    <property type="match status" value="1"/>
</dbReference>
<dbReference type="PIRSF" id="PIRSF005650">
    <property type="entry name" value="Uridylate_kin"/>
    <property type="match status" value="1"/>
</dbReference>
<dbReference type="SUPFAM" id="SSF53633">
    <property type="entry name" value="Carbamate kinase-like"/>
    <property type="match status" value="1"/>
</dbReference>
<gene>
    <name evidence="1" type="primary">pyrH</name>
    <name type="ordered locus">RC0198</name>
</gene>
<sequence length="242" mass="26686">MISDINALKYKKVLLKVSGEALMGDKQFGHEYDVIKKIAIDIKEVIDLGVEVAIVVGGGNIYRGINAALVGMDRASADYIGMLATVINALTLQNVMESLNIYTRVLSAIPMMSVCEPYIRRKAKRHMEKKRVVIFAGGTGNPFCTTDSAAVLRAIEMNCDILLKATQVDGVYDSDPKKNPDAKKYFTISYKDVITNNLQVMDTAAIAVARENKLPIRVFSIKEQGNFARVIQDKGEYTTIEA</sequence>
<protein>
    <recommendedName>
        <fullName evidence="1">Uridylate kinase</fullName>
        <shortName evidence="1">UK</shortName>
        <ecNumber evidence="1">2.7.4.22</ecNumber>
    </recommendedName>
    <alternativeName>
        <fullName evidence="1">Uridine monophosphate kinase</fullName>
        <shortName evidence="1">UMP kinase</shortName>
        <shortName evidence="1">UMPK</shortName>
    </alternativeName>
</protein>
<organism>
    <name type="scientific">Rickettsia conorii (strain ATCC VR-613 / Malish 7)</name>
    <dbReference type="NCBI Taxonomy" id="272944"/>
    <lineage>
        <taxon>Bacteria</taxon>
        <taxon>Pseudomonadati</taxon>
        <taxon>Pseudomonadota</taxon>
        <taxon>Alphaproteobacteria</taxon>
        <taxon>Rickettsiales</taxon>
        <taxon>Rickettsiaceae</taxon>
        <taxon>Rickettsieae</taxon>
        <taxon>Rickettsia</taxon>
        <taxon>spotted fever group</taxon>
    </lineage>
</organism>
<accession>Q92J71</accession>